<name>RL4_MYCSS</name>
<organism>
    <name type="scientific">Mycobacterium sp. (strain MCS)</name>
    <dbReference type="NCBI Taxonomy" id="164756"/>
    <lineage>
        <taxon>Bacteria</taxon>
        <taxon>Bacillati</taxon>
        <taxon>Actinomycetota</taxon>
        <taxon>Actinomycetes</taxon>
        <taxon>Mycobacteriales</taxon>
        <taxon>Mycobacteriaceae</taxon>
        <taxon>Mycobacterium</taxon>
    </lineage>
</organism>
<comment type="function">
    <text evidence="1">One of the primary rRNA binding proteins, this protein initially binds near the 5'-end of the 23S rRNA. It is important during the early stages of 50S assembly. It makes multiple contacts with different domains of the 23S rRNA in the assembled 50S subunit and ribosome.</text>
</comment>
<comment type="function">
    <text evidence="1">Forms part of the polypeptide exit tunnel.</text>
</comment>
<comment type="subunit">
    <text evidence="1">Part of the 50S ribosomal subunit.</text>
</comment>
<comment type="similarity">
    <text evidence="1">Belongs to the universal ribosomal protein uL4 family.</text>
</comment>
<reference key="1">
    <citation type="submission" date="2006-06" db="EMBL/GenBank/DDBJ databases">
        <title>Complete sequence of chromosome of Mycobacterium sp. MCS.</title>
        <authorList>
            <consortium name="US DOE Joint Genome Institute"/>
            <person name="Copeland A."/>
            <person name="Lucas S."/>
            <person name="Lapidus A."/>
            <person name="Barry K."/>
            <person name="Detter J.C."/>
            <person name="Glavina del Rio T."/>
            <person name="Hammon N."/>
            <person name="Israni S."/>
            <person name="Dalin E."/>
            <person name="Tice H."/>
            <person name="Pitluck S."/>
            <person name="Martinez M."/>
            <person name="Schmutz J."/>
            <person name="Larimer F."/>
            <person name="Land M."/>
            <person name="Hauser L."/>
            <person name="Kyrpides N."/>
            <person name="Kim E."/>
            <person name="Miller C.D."/>
            <person name="Hughes J.E."/>
            <person name="Anderson A.J."/>
            <person name="Sims R.C."/>
            <person name="Richardson P."/>
        </authorList>
    </citation>
    <scope>NUCLEOTIDE SEQUENCE [LARGE SCALE GENOMIC DNA]</scope>
    <source>
        <strain>MCS</strain>
    </source>
</reference>
<accession>Q1BDA6</accession>
<evidence type="ECO:0000255" key="1">
    <source>
        <dbReference type="HAMAP-Rule" id="MF_01328"/>
    </source>
</evidence>
<evidence type="ECO:0000256" key="2">
    <source>
        <dbReference type="SAM" id="MobiDB-lite"/>
    </source>
</evidence>
<evidence type="ECO:0000305" key="3"/>
<feature type="chain" id="PRO_1000052447" description="Large ribosomal subunit protein uL4">
    <location>
        <begin position="1"/>
        <end position="219"/>
    </location>
</feature>
<feature type="region of interest" description="Disordered" evidence="2">
    <location>
        <begin position="43"/>
        <end position="100"/>
    </location>
</feature>
<keyword id="KW-0687">Ribonucleoprotein</keyword>
<keyword id="KW-0689">Ribosomal protein</keyword>
<keyword id="KW-0694">RNA-binding</keyword>
<keyword id="KW-0699">rRNA-binding</keyword>
<dbReference type="EMBL" id="CP000384">
    <property type="protein sequence ID" value="ABG07128.1"/>
    <property type="molecule type" value="Genomic_DNA"/>
</dbReference>
<dbReference type="SMR" id="Q1BDA6"/>
<dbReference type="KEGG" id="mmc:Mmcs_1014"/>
<dbReference type="HOGENOM" id="CLU_041575_5_0_11"/>
<dbReference type="BioCyc" id="MSP164756:G1G6O-1038-MONOMER"/>
<dbReference type="GO" id="GO:1990904">
    <property type="term" value="C:ribonucleoprotein complex"/>
    <property type="evidence" value="ECO:0007669"/>
    <property type="project" value="UniProtKB-KW"/>
</dbReference>
<dbReference type="GO" id="GO:0005840">
    <property type="term" value="C:ribosome"/>
    <property type="evidence" value="ECO:0007669"/>
    <property type="project" value="UniProtKB-KW"/>
</dbReference>
<dbReference type="GO" id="GO:0019843">
    <property type="term" value="F:rRNA binding"/>
    <property type="evidence" value="ECO:0007669"/>
    <property type="project" value="UniProtKB-UniRule"/>
</dbReference>
<dbReference type="GO" id="GO:0003735">
    <property type="term" value="F:structural constituent of ribosome"/>
    <property type="evidence" value="ECO:0007669"/>
    <property type="project" value="InterPro"/>
</dbReference>
<dbReference type="GO" id="GO:0006412">
    <property type="term" value="P:translation"/>
    <property type="evidence" value="ECO:0007669"/>
    <property type="project" value="UniProtKB-UniRule"/>
</dbReference>
<dbReference type="FunFam" id="3.40.1370.10:FF:000004">
    <property type="entry name" value="50S ribosomal protein L4"/>
    <property type="match status" value="1"/>
</dbReference>
<dbReference type="Gene3D" id="3.40.1370.10">
    <property type="match status" value="1"/>
</dbReference>
<dbReference type="HAMAP" id="MF_01328_B">
    <property type="entry name" value="Ribosomal_uL4_B"/>
    <property type="match status" value="1"/>
</dbReference>
<dbReference type="InterPro" id="IPR002136">
    <property type="entry name" value="Ribosomal_uL4"/>
</dbReference>
<dbReference type="InterPro" id="IPR013005">
    <property type="entry name" value="Ribosomal_uL4-like"/>
</dbReference>
<dbReference type="InterPro" id="IPR023574">
    <property type="entry name" value="Ribosomal_uL4_dom_sf"/>
</dbReference>
<dbReference type="NCBIfam" id="TIGR03953">
    <property type="entry name" value="rplD_bact"/>
    <property type="match status" value="1"/>
</dbReference>
<dbReference type="PANTHER" id="PTHR10746">
    <property type="entry name" value="50S RIBOSOMAL PROTEIN L4"/>
    <property type="match status" value="1"/>
</dbReference>
<dbReference type="PANTHER" id="PTHR10746:SF6">
    <property type="entry name" value="LARGE RIBOSOMAL SUBUNIT PROTEIN UL4M"/>
    <property type="match status" value="1"/>
</dbReference>
<dbReference type="Pfam" id="PF00573">
    <property type="entry name" value="Ribosomal_L4"/>
    <property type="match status" value="1"/>
</dbReference>
<dbReference type="SUPFAM" id="SSF52166">
    <property type="entry name" value="Ribosomal protein L4"/>
    <property type="match status" value="1"/>
</dbReference>
<proteinExistence type="inferred from homology"/>
<sequence>MATTIEVKTPAGTTDGSVELPAELFDVEANIALMHQVVTAQLAAKRQGTHSTKTRGEVSGGGKKPYRQKGTGRARQGSTRAPQFTGGGTVHGPQPRDYSQRTPKKMIAAALRGALSDRARNGRIHAVTELVEGQTPSTKSAKAFLSTLTERKQVLVVIGRADETSERSVRNLPGVHIISPDQLNTYDVLKADDVVFSVEALNAYINAQTARTEKEGASA</sequence>
<gene>
    <name evidence="1" type="primary">rplD</name>
    <name type="ordered locus">Mmcs_1014</name>
</gene>
<protein>
    <recommendedName>
        <fullName evidence="1">Large ribosomal subunit protein uL4</fullName>
    </recommendedName>
    <alternativeName>
        <fullName evidence="3">50S ribosomal protein L4</fullName>
    </alternativeName>
</protein>